<proteinExistence type="inferred from homology"/>
<accession>Q98KA8</accession>
<sequence length="484" mass="50751">MKLRDLAGVLPVEGTASADLEVTGISSDSRQVKPGVVFFALAGTKADGAAYAADAARRGALAVVAGKSNSVAGLPVPVLTVDDPRLALALSAARYFGKQPRTMVAVTGTSGKTSVAAFTRQIWEQAGYAAASIGTTGVVAPGRNEYGSLTTPDPVALHQLLRELADAGVTYASMEASSHGLDQRRLDGVKLAAGGFTNLGRDHMDYHPTVEDYHRAKLRLFDTLLPKGAPAVIFADDPWSAPTIQAAQAAGLNVLTVGRHGDFLTLKRVEHERHRQRAEVEAEGVLYEIDLPLAGDFQISNALVSAGLAISTGTPVAKALAALEKLKGAPGRLDLVGTTVSGAPVYVDYAHKPDALENVLASVRPFTTGRVMVVFGCGGDRDRGKRPIMGEIATRLADVVIVTDDNPRSEVPETIRAAILAAAPGAIEIGDRRKAIHEAVGMLHAGDTLIVAGKGHEEGQTIGSETLHFSDHEEVRAALRERAA</sequence>
<feature type="chain" id="PRO_0000101930" description="UDP-N-acetylmuramoyl-L-alanyl-D-glutamate--2,6-diaminopimelate ligase">
    <location>
        <begin position="1"/>
        <end position="484"/>
    </location>
</feature>
<feature type="short sequence motif" description="Meso-diaminopimelate recognition motif">
    <location>
        <begin position="405"/>
        <end position="408"/>
    </location>
</feature>
<feature type="binding site" evidence="1">
    <location>
        <position position="29"/>
    </location>
    <ligand>
        <name>UDP-N-acetyl-alpha-D-muramoyl-L-alanyl-D-glutamate</name>
        <dbReference type="ChEBI" id="CHEBI:83900"/>
    </ligand>
</feature>
<feature type="binding site" evidence="1">
    <location>
        <begin position="108"/>
        <end position="114"/>
    </location>
    <ligand>
        <name>ATP</name>
        <dbReference type="ChEBI" id="CHEBI:30616"/>
    </ligand>
</feature>
<feature type="binding site" evidence="1">
    <location>
        <begin position="150"/>
        <end position="151"/>
    </location>
    <ligand>
        <name>UDP-N-acetyl-alpha-D-muramoyl-L-alanyl-D-glutamate</name>
        <dbReference type="ChEBI" id="CHEBI:83900"/>
    </ligand>
</feature>
<feature type="binding site" evidence="1">
    <location>
        <position position="177"/>
    </location>
    <ligand>
        <name>UDP-N-acetyl-alpha-D-muramoyl-L-alanyl-D-glutamate</name>
        <dbReference type="ChEBI" id="CHEBI:83900"/>
    </ligand>
</feature>
<feature type="binding site" evidence="1">
    <location>
        <position position="183"/>
    </location>
    <ligand>
        <name>UDP-N-acetyl-alpha-D-muramoyl-L-alanyl-D-glutamate</name>
        <dbReference type="ChEBI" id="CHEBI:83900"/>
    </ligand>
</feature>
<feature type="binding site" evidence="1">
    <location>
        <position position="185"/>
    </location>
    <ligand>
        <name>UDP-N-acetyl-alpha-D-muramoyl-L-alanyl-D-glutamate</name>
        <dbReference type="ChEBI" id="CHEBI:83900"/>
    </ligand>
</feature>
<feature type="binding site" evidence="1">
    <location>
        <position position="381"/>
    </location>
    <ligand>
        <name>meso-2,6-diaminopimelate</name>
        <dbReference type="ChEBI" id="CHEBI:57791"/>
    </ligand>
</feature>
<feature type="binding site" evidence="1">
    <location>
        <begin position="405"/>
        <end position="408"/>
    </location>
    <ligand>
        <name>meso-2,6-diaminopimelate</name>
        <dbReference type="ChEBI" id="CHEBI:57791"/>
    </ligand>
</feature>
<feature type="binding site" evidence="1">
    <location>
        <position position="453"/>
    </location>
    <ligand>
        <name>meso-2,6-diaminopimelate</name>
        <dbReference type="ChEBI" id="CHEBI:57791"/>
    </ligand>
</feature>
<feature type="binding site" evidence="1">
    <location>
        <position position="457"/>
    </location>
    <ligand>
        <name>meso-2,6-diaminopimelate</name>
        <dbReference type="ChEBI" id="CHEBI:57791"/>
    </ligand>
</feature>
<feature type="modified residue" description="N6-carboxylysine" evidence="1">
    <location>
        <position position="217"/>
    </location>
</feature>
<gene>
    <name evidence="1" type="primary">murE</name>
    <name type="ordered locus">mll1560</name>
</gene>
<organism>
    <name type="scientific">Mesorhizobium japonicum (strain LMG 29417 / CECT 9101 / MAFF 303099)</name>
    <name type="common">Mesorhizobium loti (strain MAFF 303099)</name>
    <dbReference type="NCBI Taxonomy" id="266835"/>
    <lineage>
        <taxon>Bacteria</taxon>
        <taxon>Pseudomonadati</taxon>
        <taxon>Pseudomonadota</taxon>
        <taxon>Alphaproteobacteria</taxon>
        <taxon>Hyphomicrobiales</taxon>
        <taxon>Phyllobacteriaceae</taxon>
        <taxon>Mesorhizobium</taxon>
    </lineage>
</organism>
<evidence type="ECO:0000255" key="1">
    <source>
        <dbReference type="HAMAP-Rule" id="MF_00208"/>
    </source>
</evidence>
<keyword id="KW-0067">ATP-binding</keyword>
<keyword id="KW-0131">Cell cycle</keyword>
<keyword id="KW-0132">Cell division</keyword>
<keyword id="KW-0133">Cell shape</keyword>
<keyword id="KW-0961">Cell wall biogenesis/degradation</keyword>
<keyword id="KW-0963">Cytoplasm</keyword>
<keyword id="KW-0436">Ligase</keyword>
<keyword id="KW-0460">Magnesium</keyword>
<keyword id="KW-0547">Nucleotide-binding</keyword>
<keyword id="KW-0573">Peptidoglycan synthesis</keyword>
<name>MURE_RHILO</name>
<protein>
    <recommendedName>
        <fullName evidence="1">UDP-N-acetylmuramoyl-L-alanyl-D-glutamate--2,6-diaminopimelate ligase</fullName>
        <ecNumber evidence="1">6.3.2.13</ecNumber>
    </recommendedName>
    <alternativeName>
        <fullName evidence="1">Meso-A2pm-adding enzyme</fullName>
    </alternativeName>
    <alternativeName>
        <fullName evidence="1">Meso-diaminopimelate-adding enzyme</fullName>
    </alternativeName>
    <alternativeName>
        <fullName evidence="1">UDP-MurNAc-L-Ala-D-Glu:meso-diaminopimelate ligase</fullName>
    </alternativeName>
    <alternativeName>
        <fullName evidence="1">UDP-MurNAc-tripeptide synthetase</fullName>
    </alternativeName>
    <alternativeName>
        <fullName evidence="1">UDP-N-acetylmuramyl-tripeptide synthetase</fullName>
    </alternativeName>
</protein>
<comment type="function">
    <text evidence="1">Catalyzes the addition of meso-diaminopimelic acid to the nucleotide precursor UDP-N-acetylmuramoyl-L-alanyl-D-glutamate (UMAG) in the biosynthesis of bacterial cell-wall peptidoglycan.</text>
</comment>
<comment type="catalytic activity">
    <reaction evidence="1">
        <text>UDP-N-acetyl-alpha-D-muramoyl-L-alanyl-D-glutamate + meso-2,6-diaminopimelate + ATP = UDP-N-acetyl-alpha-D-muramoyl-L-alanyl-gamma-D-glutamyl-meso-2,6-diaminopimelate + ADP + phosphate + H(+)</text>
        <dbReference type="Rhea" id="RHEA:23676"/>
        <dbReference type="ChEBI" id="CHEBI:15378"/>
        <dbReference type="ChEBI" id="CHEBI:30616"/>
        <dbReference type="ChEBI" id="CHEBI:43474"/>
        <dbReference type="ChEBI" id="CHEBI:57791"/>
        <dbReference type="ChEBI" id="CHEBI:83900"/>
        <dbReference type="ChEBI" id="CHEBI:83905"/>
        <dbReference type="ChEBI" id="CHEBI:456216"/>
        <dbReference type="EC" id="6.3.2.13"/>
    </reaction>
</comment>
<comment type="cofactor">
    <cofactor evidence="1">
        <name>Mg(2+)</name>
        <dbReference type="ChEBI" id="CHEBI:18420"/>
    </cofactor>
</comment>
<comment type="pathway">
    <text evidence="1">Cell wall biogenesis; peptidoglycan biosynthesis.</text>
</comment>
<comment type="subcellular location">
    <subcellularLocation>
        <location evidence="1">Cytoplasm</location>
    </subcellularLocation>
</comment>
<comment type="PTM">
    <text evidence="1">Carboxylation is probably crucial for Mg(2+) binding and, consequently, for the gamma-phosphate positioning of ATP.</text>
</comment>
<comment type="similarity">
    <text evidence="1">Belongs to the MurCDEF family. MurE subfamily.</text>
</comment>
<dbReference type="EC" id="6.3.2.13" evidence="1"/>
<dbReference type="EMBL" id="BA000012">
    <property type="protein sequence ID" value="BAB48906.1"/>
    <property type="molecule type" value="Genomic_DNA"/>
</dbReference>
<dbReference type="RefSeq" id="WP_010910259.1">
    <property type="nucleotide sequence ID" value="NC_002678.2"/>
</dbReference>
<dbReference type="SMR" id="Q98KA8"/>
<dbReference type="KEGG" id="mlo:mll1560"/>
<dbReference type="PATRIC" id="fig|266835.9.peg.1257"/>
<dbReference type="eggNOG" id="COG0769">
    <property type="taxonomic scope" value="Bacteria"/>
</dbReference>
<dbReference type="HOGENOM" id="CLU_022291_3_1_5"/>
<dbReference type="UniPathway" id="UPA00219"/>
<dbReference type="Proteomes" id="UP000000552">
    <property type="component" value="Chromosome"/>
</dbReference>
<dbReference type="GO" id="GO:0005737">
    <property type="term" value="C:cytoplasm"/>
    <property type="evidence" value="ECO:0007669"/>
    <property type="project" value="UniProtKB-SubCell"/>
</dbReference>
<dbReference type="GO" id="GO:0005524">
    <property type="term" value="F:ATP binding"/>
    <property type="evidence" value="ECO:0007669"/>
    <property type="project" value="UniProtKB-UniRule"/>
</dbReference>
<dbReference type="GO" id="GO:0000287">
    <property type="term" value="F:magnesium ion binding"/>
    <property type="evidence" value="ECO:0007669"/>
    <property type="project" value="UniProtKB-UniRule"/>
</dbReference>
<dbReference type="GO" id="GO:0008765">
    <property type="term" value="F:UDP-N-acetylmuramoylalanyl-D-glutamate-2,6-diaminopimelate ligase activity"/>
    <property type="evidence" value="ECO:0007669"/>
    <property type="project" value="UniProtKB-UniRule"/>
</dbReference>
<dbReference type="GO" id="GO:0051301">
    <property type="term" value="P:cell division"/>
    <property type="evidence" value="ECO:0007669"/>
    <property type="project" value="UniProtKB-KW"/>
</dbReference>
<dbReference type="GO" id="GO:0071555">
    <property type="term" value="P:cell wall organization"/>
    <property type="evidence" value="ECO:0007669"/>
    <property type="project" value="UniProtKB-KW"/>
</dbReference>
<dbReference type="GO" id="GO:0009252">
    <property type="term" value="P:peptidoglycan biosynthetic process"/>
    <property type="evidence" value="ECO:0007669"/>
    <property type="project" value="UniProtKB-UniRule"/>
</dbReference>
<dbReference type="GO" id="GO:0008360">
    <property type="term" value="P:regulation of cell shape"/>
    <property type="evidence" value="ECO:0007669"/>
    <property type="project" value="UniProtKB-KW"/>
</dbReference>
<dbReference type="Gene3D" id="3.90.190.20">
    <property type="entry name" value="Mur ligase, C-terminal domain"/>
    <property type="match status" value="1"/>
</dbReference>
<dbReference type="Gene3D" id="3.40.1190.10">
    <property type="entry name" value="Mur-like, catalytic domain"/>
    <property type="match status" value="1"/>
</dbReference>
<dbReference type="Gene3D" id="3.40.1390.10">
    <property type="entry name" value="MurE/MurF, N-terminal domain"/>
    <property type="match status" value="1"/>
</dbReference>
<dbReference type="HAMAP" id="MF_00208">
    <property type="entry name" value="MurE"/>
    <property type="match status" value="1"/>
</dbReference>
<dbReference type="InterPro" id="IPR036565">
    <property type="entry name" value="Mur-like_cat_sf"/>
</dbReference>
<dbReference type="InterPro" id="IPR004101">
    <property type="entry name" value="Mur_ligase_C"/>
</dbReference>
<dbReference type="InterPro" id="IPR036615">
    <property type="entry name" value="Mur_ligase_C_dom_sf"/>
</dbReference>
<dbReference type="InterPro" id="IPR013221">
    <property type="entry name" value="Mur_ligase_cen"/>
</dbReference>
<dbReference type="InterPro" id="IPR000713">
    <property type="entry name" value="Mur_ligase_N"/>
</dbReference>
<dbReference type="InterPro" id="IPR035911">
    <property type="entry name" value="MurE/MurF_N"/>
</dbReference>
<dbReference type="InterPro" id="IPR005761">
    <property type="entry name" value="UDP-N-AcMur-Glu-dNH2Pim_ligase"/>
</dbReference>
<dbReference type="NCBIfam" id="TIGR01085">
    <property type="entry name" value="murE"/>
    <property type="match status" value="1"/>
</dbReference>
<dbReference type="NCBIfam" id="NF001124">
    <property type="entry name" value="PRK00139.1-2"/>
    <property type="match status" value="1"/>
</dbReference>
<dbReference type="NCBIfam" id="NF001126">
    <property type="entry name" value="PRK00139.1-4"/>
    <property type="match status" value="1"/>
</dbReference>
<dbReference type="PANTHER" id="PTHR23135">
    <property type="entry name" value="MUR LIGASE FAMILY MEMBER"/>
    <property type="match status" value="1"/>
</dbReference>
<dbReference type="PANTHER" id="PTHR23135:SF4">
    <property type="entry name" value="UDP-N-ACETYLMURAMOYL-L-ALANYL-D-GLUTAMATE--2,6-DIAMINOPIMELATE LIGASE MURE HOMOLOG, CHLOROPLASTIC"/>
    <property type="match status" value="1"/>
</dbReference>
<dbReference type="Pfam" id="PF01225">
    <property type="entry name" value="Mur_ligase"/>
    <property type="match status" value="1"/>
</dbReference>
<dbReference type="Pfam" id="PF02875">
    <property type="entry name" value="Mur_ligase_C"/>
    <property type="match status" value="1"/>
</dbReference>
<dbReference type="Pfam" id="PF08245">
    <property type="entry name" value="Mur_ligase_M"/>
    <property type="match status" value="1"/>
</dbReference>
<dbReference type="SUPFAM" id="SSF53623">
    <property type="entry name" value="MurD-like peptide ligases, catalytic domain"/>
    <property type="match status" value="1"/>
</dbReference>
<dbReference type="SUPFAM" id="SSF53244">
    <property type="entry name" value="MurD-like peptide ligases, peptide-binding domain"/>
    <property type="match status" value="1"/>
</dbReference>
<dbReference type="SUPFAM" id="SSF63418">
    <property type="entry name" value="MurE/MurF N-terminal domain"/>
    <property type="match status" value="1"/>
</dbReference>
<reference key="1">
    <citation type="journal article" date="2000" name="DNA Res.">
        <title>Complete genome structure of the nitrogen-fixing symbiotic bacterium Mesorhizobium loti.</title>
        <authorList>
            <person name="Kaneko T."/>
            <person name="Nakamura Y."/>
            <person name="Sato S."/>
            <person name="Asamizu E."/>
            <person name="Kato T."/>
            <person name="Sasamoto S."/>
            <person name="Watanabe A."/>
            <person name="Idesawa K."/>
            <person name="Ishikawa A."/>
            <person name="Kawashima K."/>
            <person name="Kimura T."/>
            <person name="Kishida Y."/>
            <person name="Kiyokawa C."/>
            <person name="Kohara M."/>
            <person name="Matsumoto M."/>
            <person name="Matsuno A."/>
            <person name="Mochizuki Y."/>
            <person name="Nakayama S."/>
            <person name="Nakazaki N."/>
            <person name="Shimpo S."/>
            <person name="Sugimoto M."/>
            <person name="Takeuchi C."/>
            <person name="Yamada M."/>
            <person name="Tabata S."/>
        </authorList>
    </citation>
    <scope>NUCLEOTIDE SEQUENCE [LARGE SCALE GENOMIC DNA]</scope>
    <source>
        <strain>LMG 29417 / CECT 9101 / MAFF 303099</strain>
    </source>
</reference>